<feature type="chain" id="PRO_0000345232" description="D-aminoacyl-tRNA deacylase">
    <location>
        <begin position="1"/>
        <end position="252"/>
    </location>
</feature>
<evidence type="ECO:0000255" key="1">
    <source>
        <dbReference type="HAMAP-Rule" id="MF_00562"/>
    </source>
</evidence>
<proteinExistence type="inferred from homology"/>
<keyword id="KW-0378">Hydrolase</keyword>
<keyword id="KW-0479">Metal-binding</keyword>
<keyword id="KW-0862">Zinc</keyword>
<reference key="1">
    <citation type="submission" date="2008-03" db="EMBL/GenBank/DDBJ databases">
        <title>Complete sequence of Thermoproteus neutrophilus V24Sta.</title>
        <authorList>
            <consortium name="US DOE Joint Genome Institute"/>
            <person name="Copeland A."/>
            <person name="Lucas S."/>
            <person name="Lapidus A."/>
            <person name="Glavina del Rio T."/>
            <person name="Dalin E."/>
            <person name="Tice H."/>
            <person name="Bruce D."/>
            <person name="Goodwin L."/>
            <person name="Pitluck S."/>
            <person name="Sims D."/>
            <person name="Brettin T."/>
            <person name="Detter J.C."/>
            <person name="Han C."/>
            <person name="Kuske C.R."/>
            <person name="Schmutz J."/>
            <person name="Larimer F."/>
            <person name="Land M."/>
            <person name="Hauser L."/>
            <person name="Kyrpides N."/>
            <person name="Mikhailova N."/>
            <person name="Biddle J.F."/>
            <person name="Zhang Z."/>
            <person name="Fitz-Gibbon S.T."/>
            <person name="Lowe T.M."/>
            <person name="Saltikov C."/>
            <person name="House C.H."/>
            <person name="Richardson P."/>
        </authorList>
    </citation>
    <scope>NUCLEOTIDE SEQUENCE [LARGE SCALE GENOMIC DNA]</scope>
    <source>
        <strain>DSM 2338 / JCM 9278 / NBRC 100436 / V24Sta</strain>
    </source>
</reference>
<organism>
    <name type="scientific">Pyrobaculum neutrophilum (strain DSM 2338 / JCM 9278 / NBRC 100436 / V24Sta)</name>
    <name type="common">Thermoproteus neutrophilus</name>
    <dbReference type="NCBI Taxonomy" id="444157"/>
    <lineage>
        <taxon>Archaea</taxon>
        <taxon>Thermoproteota</taxon>
        <taxon>Thermoprotei</taxon>
        <taxon>Thermoproteales</taxon>
        <taxon>Thermoproteaceae</taxon>
        <taxon>Pyrobaculum</taxon>
    </lineage>
</organism>
<protein>
    <recommendedName>
        <fullName evidence="1">D-aminoacyl-tRNA deacylase</fullName>
        <ecNumber evidence="1">3.1.1.96</ecNumber>
    </recommendedName>
    <alternativeName>
        <fullName>D-tyrosyl-tRNA(Tyr) deacylase</fullName>
    </alternativeName>
</protein>
<comment type="function">
    <text evidence="1">D-aminoacyl-tRNA deacylase with broad substrate specificity. By recycling D-aminoacyl-tRNA to D-amino acids and free tRNA molecules, this enzyme counteracts the toxicity associated with the formation of D-aminoacyl-tRNA entities in vivo.</text>
</comment>
<comment type="catalytic activity">
    <reaction evidence="1">
        <text>a D-aminoacyl-tRNA + H2O = a tRNA + a D-alpha-amino acid + H(+)</text>
        <dbReference type="Rhea" id="RHEA:13953"/>
        <dbReference type="Rhea" id="RHEA-COMP:10123"/>
        <dbReference type="Rhea" id="RHEA-COMP:10124"/>
        <dbReference type="ChEBI" id="CHEBI:15377"/>
        <dbReference type="ChEBI" id="CHEBI:15378"/>
        <dbReference type="ChEBI" id="CHEBI:59871"/>
        <dbReference type="ChEBI" id="CHEBI:78442"/>
        <dbReference type="ChEBI" id="CHEBI:79333"/>
        <dbReference type="EC" id="3.1.1.96"/>
    </reaction>
</comment>
<comment type="catalytic activity">
    <reaction evidence="1">
        <text>glycyl-tRNA(Ala) + H2O = tRNA(Ala) + glycine + H(+)</text>
        <dbReference type="Rhea" id="RHEA:53744"/>
        <dbReference type="Rhea" id="RHEA-COMP:9657"/>
        <dbReference type="Rhea" id="RHEA-COMP:13640"/>
        <dbReference type="ChEBI" id="CHEBI:15377"/>
        <dbReference type="ChEBI" id="CHEBI:15378"/>
        <dbReference type="ChEBI" id="CHEBI:57305"/>
        <dbReference type="ChEBI" id="CHEBI:78442"/>
        <dbReference type="ChEBI" id="CHEBI:78522"/>
        <dbReference type="EC" id="3.1.1.96"/>
    </reaction>
</comment>
<comment type="cofactor">
    <cofactor evidence="1">
        <name>Zn(2+)</name>
        <dbReference type="ChEBI" id="CHEBI:29105"/>
    </cofactor>
    <text evidence="1">Binds 2 Zn(2+) ions per subunit.</text>
</comment>
<comment type="subunit">
    <text evidence="1">Monomer.</text>
</comment>
<comment type="similarity">
    <text evidence="1">Belongs to the DtdA deacylase family.</text>
</comment>
<accession>B1Y9H2</accession>
<name>DTDA_PYRNV</name>
<gene>
    <name evidence="1" type="primary">dtdA</name>
    <name type="ordered locus">Tneu_1476</name>
</gene>
<dbReference type="EC" id="3.1.1.96" evidence="1"/>
<dbReference type="EMBL" id="CP001014">
    <property type="protein sequence ID" value="ACB40401.1"/>
    <property type="molecule type" value="Genomic_DNA"/>
</dbReference>
<dbReference type="RefSeq" id="WP_012350820.1">
    <property type="nucleotide sequence ID" value="NC_010525.1"/>
</dbReference>
<dbReference type="SMR" id="B1Y9H2"/>
<dbReference type="STRING" id="444157.Tneu_1476"/>
<dbReference type="GeneID" id="6165793"/>
<dbReference type="KEGG" id="tne:Tneu_1476"/>
<dbReference type="eggNOG" id="arCOG01616">
    <property type="taxonomic scope" value="Archaea"/>
</dbReference>
<dbReference type="HOGENOM" id="CLU_056464_1_0_2"/>
<dbReference type="OrthoDB" id="9863at2157"/>
<dbReference type="Proteomes" id="UP000001694">
    <property type="component" value="Chromosome"/>
</dbReference>
<dbReference type="GO" id="GO:0051499">
    <property type="term" value="F:D-aminoacyl-tRNA deacylase activity"/>
    <property type="evidence" value="ECO:0007669"/>
    <property type="project" value="UniProtKB-UniRule"/>
</dbReference>
<dbReference type="GO" id="GO:0008270">
    <property type="term" value="F:zinc ion binding"/>
    <property type="evidence" value="ECO:0007669"/>
    <property type="project" value="UniProtKB-UniRule"/>
</dbReference>
<dbReference type="GO" id="GO:0019478">
    <property type="term" value="P:D-amino acid catabolic process"/>
    <property type="evidence" value="ECO:0007669"/>
    <property type="project" value="UniProtKB-UniRule"/>
</dbReference>
<dbReference type="Gene3D" id="3.40.50.10700">
    <property type="entry name" value="AF0625-like"/>
    <property type="match status" value="1"/>
</dbReference>
<dbReference type="Gene3D" id="3.40.630.50">
    <property type="entry name" value="AF0625-like"/>
    <property type="match status" value="1"/>
</dbReference>
<dbReference type="HAMAP" id="MF_00562">
    <property type="entry name" value="Deacylase_DtdA"/>
    <property type="match status" value="1"/>
</dbReference>
<dbReference type="InterPro" id="IPR018033">
    <property type="entry name" value="Deacylase_DtdA_archaea"/>
</dbReference>
<dbReference type="InterPro" id="IPR007508">
    <property type="entry name" value="DtdA"/>
</dbReference>
<dbReference type="PANTHER" id="PTHR34667">
    <property type="entry name" value="D-AMINOACYL-TRNA DEACYLASE"/>
    <property type="match status" value="1"/>
</dbReference>
<dbReference type="PANTHER" id="PTHR34667:SF1">
    <property type="entry name" value="D-AMINOACYL-TRNA DEACYLASE"/>
    <property type="match status" value="1"/>
</dbReference>
<dbReference type="Pfam" id="PF04414">
    <property type="entry name" value="tRNA_deacylase"/>
    <property type="match status" value="1"/>
</dbReference>
<dbReference type="PIRSF" id="PIRSF016210">
    <property type="entry name" value="UCP016210"/>
    <property type="match status" value="1"/>
</dbReference>
<dbReference type="SUPFAM" id="SSF142535">
    <property type="entry name" value="AF0625-like"/>
    <property type="match status" value="1"/>
</dbReference>
<sequence>MYVVVLSLGDPVSRTFLELVPEMPLVETRGEIEVRKFGEWPAVVHKGEPTDFNREDLLLSLGKYAIFISRHEMANPRPMFTVHTPGSWPDVSVANPPLATAIFRALCRHAEEPFKCAFEATHHPPNTSAASATFVEVGSTEAEWRDRRAVGVLVQALEEVLGRELGAGATTMVVGDLHYSTVADSALNGEVELGHILPKYLETTLQHVKTAFYKHTTPVRRVVVFRKNVKNPARAEVVEFLREREVEVVLKG</sequence>